<protein>
    <recommendedName>
        <fullName>Cytochrome c2 iso-1</fullName>
    </recommendedName>
    <alternativeName>
        <fullName>Cytochrome c552</fullName>
    </alternativeName>
</protein>
<evidence type="ECO:0000269" key="1">
    <source>
    </source>
</evidence>
<evidence type="ECO:0000305" key="2"/>
<accession>P81153</accession>
<reference key="1">
    <citation type="journal article" date="1998" name="Biochim. Biophys. Acta">
        <title>Purification and primary structure analysis of two cytochrome c2 isozymes from the purple phototrophic bacterium Rhodospirillum centenum.</title>
        <authorList>
            <person name="Samyn B."/>
            <person name="Fitch J."/>
            <person name="Meyer T.E."/>
            <person name="Cusanovich M.A."/>
            <person name="van Beeumen J.J."/>
        </authorList>
    </citation>
    <scope>PROTEIN SEQUENCE</scope>
    <scope>PYROGLUTAMATE FORMATION AT GLN-1</scope>
    <source>
        <strain>ATCC 43720 / DSM 9894 / IAM 14193 / JCM 21060 / NBRC 16667</strain>
    </source>
</reference>
<comment type="function">
    <text>Cytochrome c2 is found mainly in purple, non-sulfur, photosynthetic bacteria where it functions as the electron donor to the oxidized bacteriochlorophyll in the photophosphorylation pathway. However, it may also have a role in the respiratory chain and is found in some non-photosynthetic bacteria.</text>
</comment>
<comment type="biophysicochemical properties">
    <redoxPotential>
        <text>E(0) is +316 mV.</text>
    </redoxPotential>
</comment>
<comment type="PTM">
    <text>Binds 1 heme c group covalently per subunit.</text>
</comment>
<comment type="similarity">
    <text evidence="2">Belongs to the cytochrome c family.</text>
</comment>
<keyword id="KW-0903">Direct protein sequencing</keyword>
<keyword id="KW-0249">Electron transport</keyword>
<keyword id="KW-0349">Heme</keyword>
<keyword id="KW-0408">Iron</keyword>
<keyword id="KW-0479">Metal-binding</keyword>
<keyword id="KW-0602">Photosynthesis</keyword>
<keyword id="KW-0873">Pyrrolidone carboxylic acid</keyword>
<keyword id="KW-0813">Transport</keyword>
<organism>
    <name type="scientific">Rhodospirillum centenum</name>
    <name type="common">Rhodocista centenaria</name>
    <dbReference type="NCBI Taxonomy" id="34018"/>
    <lineage>
        <taxon>Bacteria</taxon>
        <taxon>Pseudomonadati</taxon>
        <taxon>Pseudomonadota</taxon>
        <taxon>Alphaproteobacteria</taxon>
        <taxon>Rhodospirillales</taxon>
        <taxon>Rhodospirillaceae</taxon>
        <taxon>Rhodospirillum</taxon>
    </lineage>
</organism>
<proteinExistence type="evidence at protein level"/>
<feature type="chain" id="PRO_0000108341" description="Cytochrome c2 iso-1">
    <location>
        <begin position="1"/>
        <end position="120"/>
    </location>
</feature>
<feature type="binding site" description="covalent">
    <location>
        <position position="15"/>
    </location>
    <ligand>
        <name>heme c</name>
        <dbReference type="ChEBI" id="CHEBI:61717"/>
    </ligand>
</feature>
<feature type="binding site" description="covalent">
    <location>
        <position position="18"/>
    </location>
    <ligand>
        <name>heme c</name>
        <dbReference type="ChEBI" id="CHEBI:61717"/>
    </ligand>
</feature>
<feature type="binding site" description="axial binding residue">
    <location>
        <position position="19"/>
    </location>
    <ligand>
        <name>heme c</name>
        <dbReference type="ChEBI" id="CHEBI:61717"/>
    </ligand>
    <ligandPart>
        <name>Fe</name>
        <dbReference type="ChEBI" id="CHEBI:18248"/>
    </ligandPart>
</feature>
<feature type="binding site" description="axial binding residue">
    <location>
        <position position="98"/>
    </location>
    <ligand>
        <name>heme c</name>
        <dbReference type="ChEBI" id="CHEBI:61717"/>
    </ligand>
    <ligandPart>
        <name>Fe</name>
        <dbReference type="ChEBI" id="CHEBI:18248"/>
    </ligandPart>
</feature>
<feature type="modified residue" description="Pyrrolidone carboxylic acid" evidence="1">
    <location>
        <position position="1"/>
    </location>
</feature>
<name>CYC21_RHOCE</name>
<dbReference type="SMR" id="P81153"/>
<dbReference type="GO" id="GO:0009055">
    <property type="term" value="F:electron transfer activity"/>
    <property type="evidence" value="ECO:0007669"/>
    <property type="project" value="InterPro"/>
</dbReference>
<dbReference type="GO" id="GO:0020037">
    <property type="term" value="F:heme binding"/>
    <property type="evidence" value="ECO:0007669"/>
    <property type="project" value="InterPro"/>
</dbReference>
<dbReference type="GO" id="GO:0046872">
    <property type="term" value="F:metal ion binding"/>
    <property type="evidence" value="ECO:0007669"/>
    <property type="project" value="UniProtKB-KW"/>
</dbReference>
<dbReference type="GO" id="GO:0015979">
    <property type="term" value="P:photosynthesis"/>
    <property type="evidence" value="ECO:0007669"/>
    <property type="project" value="UniProtKB-KW"/>
</dbReference>
<dbReference type="Gene3D" id="1.10.760.10">
    <property type="entry name" value="Cytochrome c-like domain"/>
    <property type="match status" value="1"/>
</dbReference>
<dbReference type="InterPro" id="IPR009056">
    <property type="entry name" value="Cyt_c-like_dom"/>
</dbReference>
<dbReference type="InterPro" id="IPR036909">
    <property type="entry name" value="Cyt_c-like_dom_sf"/>
</dbReference>
<dbReference type="InterPro" id="IPR002327">
    <property type="entry name" value="Cyt_c_1A/1B"/>
</dbReference>
<dbReference type="PANTHER" id="PTHR11961">
    <property type="entry name" value="CYTOCHROME C"/>
    <property type="match status" value="1"/>
</dbReference>
<dbReference type="Pfam" id="PF00034">
    <property type="entry name" value="Cytochrom_C"/>
    <property type="match status" value="1"/>
</dbReference>
<dbReference type="PRINTS" id="PR00604">
    <property type="entry name" value="CYTCHRMECIAB"/>
</dbReference>
<dbReference type="SUPFAM" id="SSF46626">
    <property type="entry name" value="Cytochrome c"/>
    <property type="match status" value="1"/>
</dbReference>
<dbReference type="PROSITE" id="PS51007">
    <property type="entry name" value="CYTC"/>
    <property type="match status" value="1"/>
</dbReference>
<sequence>QDGDPVKGEAVFKKCMACHRIGPDAKNLVGPVLTGVVGRQAGVAPGFSYSALNHAAGEAGLHWTAENIMAYLPDPNAFLRKFVTDAGNPEAAKGSTKMVFKLPNEQERKDVVAYLKTFSN</sequence>